<reference key="1">
    <citation type="journal article" date="2001" name="Mol. Biol. Evol.">
        <title>Changes in the recombinational environment affect divergence in the yellow gene of Drosophila.</title>
        <authorList>
            <person name="Munte A.B."/>
            <person name="Aguade M."/>
            <person name="Segarra C."/>
        </authorList>
    </citation>
    <scope>NUCLEOTIDE SEQUENCE [GENOMIC DNA]</scope>
</reference>
<keyword id="KW-0217">Developmental protein</keyword>
<keyword id="KW-0325">Glycoprotein</keyword>
<keyword id="KW-0964">Secreted</keyword>
<keyword id="KW-0732">Signal</keyword>
<proteinExistence type="inferred from homology"/>
<feature type="signal peptide" evidence="2">
    <location>
        <begin position="1"/>
        <end position="21"/>
    </location>
</feature>
<feature type="chain" id="PRO_0000031056" description="Protein yellow">
    <location>
        <begin position="22"/>
        <end position="541"/>
    </location>
</feature>
<feature type="glycosylation site" description="N-linked (GlcNAc...) asparagine" evidence="2">
    <location>
        <position position="144"/>
    </location>
</feature>
<name>YELL_DROYA</name>
<comment type="function">
    <text evidence="1">Controls the pigmentation pattern of the adult cuticle and larval mouth parts.</text>
</comment>
<comment type="subcellular location">
    <subcellularLocation>
        <location>Secreted</location>
    </subcellularLocation>
</comment>
<comment type="similarity">
    <text evidence="3">Belongs to the major royal jelly protein family.</text>
</comment>
<sequence>MFQDKGWVLLTLITLVSPSWAAYKLQERYSWNQLDFAFPNARLKEQALASGDYIPQNGLPVGVEHFGNRLFVTVPRWRDGIPATLTYINMDRSLTGSPELIPYPDWRSNTAGDCANSITTAYRIKVDECGRLWVLDTGTVGIGNTTTNPCPYAVNVFDLTTDTRIRRYELPAVDTNPNTFIANIAVDIGKNCDDAYAYFADELGYGLIAYSWEQDKSWRFSAHSYFFPDPLRGDFNVAGINFQWGEEGIFGMSLSPIRSDGYRTLYFSPLASHRQFAVSTRILRDETRTEDSYHDFVALDERGPNSHTTSRVMSDDGIELFNLIDQNAVGCWHSSMPYSPQFHGIVDRDDVGLVFPADVKIDENKNVWVLSDRMPVFLLSDLDYSDTNFRIYTAPLATLIDNTVCDLRNNAYGPPNTVSIPKQTVLPVGPPLYTKQYRPVLPQKPQTSWASSPPPPSRTYLPANSGNVVSSISVSTNTVGPAGVEVPKAYIFNQHNGINYETSGPHLFPTLQPAQPAGQDGGLKTYVNARQSGWWHHQHQG</sequence>
<dbReference type="EMBL" id="AJ300671">
    <property type="protein sequence ID" value="CAC34739.1"/>
    <property type="molecule type" value="Genomic_DNA"/>
</dbReference>
<dbReference type="SMR" id="Q9BI17"/>
<dbReference type="GlyCosmos" id="Q9BI17">
    <property type="glycosylation" value="1 site, No reported glycans"/>
</dbReference>
<dbReference type="eggNOG" id="ENOG502QQ50">
    <property type="taxonomic scope" value="Eukaryota"/>
</dbReference>
<dbReference type="OrthoDB" id="7776143at2759"/>
<dbReference type="GO" id="GO:0070451">
    <property type="term" value="C:cell hair"/>
    <property type="evidence" value="ECO:0007669"/>
    <property type="project" value="EnsemblMetazoa"/>
</dbReference>
<dbReference type="GO" id="GO:0005737">
    <property type="term" value="C:cytoplasm"/>
    <property type="evidence" value="ECO:0007669"/>
    <property type="project" value="EnsemblMetazoa"/>
</dbReference>
<dbReference type="GO" id="GO:0005576">
    <property type="term" value="C:extracellular region"/>
    <property type="evidence" value="ECO:0007669"/>
    <property type="project" value="UniProtKB-SubCell"/>
</dbReference>
<dbReference type="GO" id="GO:0048067">
    <property type="term" value="P:cuticle pigmentation"/>
    <property type="evidence" value="ECO:0007669"/>
    <property type="project" value="EnsemblMetazoa"/>
</dbReference>
<dbReference type="GO" id="GO:0048065">
    <property type="term" value="P:male courtship behavior, veined wing extension"/>
    <property type="evidence" value="ECO:0007669"/>
    <property type="project" value="EnsemblMetazoa"/>
</dbReference>
<dbReference type="GO" id="GO:0042438">
    <property type="term" value="P:melanin biosynthetic process"/>
    <property type="evidence" value="ECO:0007669"/>
    <property type="project" value="EnsemblMetazoa"/>
</dbReference>
<dbReference type="GO" id="GO:0048082">
    <property type="term" value="P:regulation of adult chitin-containing cuticle pigmentation"/>
    <property type="evidence" value="ECO:0007669"/>
    <property type="project" value="EnsemblMetazoa"/>
</dbReference>
<dbReference type="FunFam" id="2.120.10.30:FF:000046">
    <property type="entry name" value="Blast:Protein yellow"/>
    <property type="match status" value="1"/>
</dbReference>
<dbReference type="Gene3D" id="2.120.10.30">
    <property type="entry name" value="TolB, C-terminal domain"/>
    <property type="match status" value="1"/>
</dbReference>
<dbReference type="InterPro" id="IPR011042">
    <property type="entry name" value="6-blade_b-propeller_TolB-like"/>
</dbReference>
<dbReference type="InterPro" id="IPR017996">
    <property type="entry name" value="Royal_jelly/protein_yellow"/>
</dbReference>
<dbReference type="PANTHER" id="PTHR10009:SF14">
    <property type="entry name" value="PROTEIN YELLOW"/>
    <property type="match status" value="1"/>
</dbReference>
<dbReference type="PANTHER" id="PTHR10009">
    <property type="entry name" value="PROTEIN YELLOW-RELATED"/>
    <property type="match status" value="1"/>
</dbReference>
<dbReference type="Pfam" id="PF03022">
    <property type="entry name" value="MRJP"/>
    <property type="match status" value="1"/>
</dbReference>
<dbReference type="PRINTS" id="PR01366">
    <property type="entry name" value="ROYALJELLY"/>
</dbReference>
<gene>
    <name type="primary">y</name>
</gene>
<protein>
    <recommendedName>
        <fullName>Protein yellow</fullName>
    </recommendedName>
</protein>
<accession>Q9BI17</accession>
<evidence type="ECO:0000250" key="1"/>
<evidence type="ECO:0000255" key="2"/>
<evidence type="ECO:0000305" key="3"/>
<organism>
    <name type="scientific">Drosophila yakuba</name>
    <name type="common">Fruit fly</name>
    <dbReference type="NCBI Taxonomy" id="7245"/>
    <lineage>
        <taxon>Eukaryota</taxon>
        <taxon>Metazoa</taxon>
        <taxon>Ecdysozoa</taxon>
        <taxon>Arthropoda</taxon>
        <taxon>Hexapoda</taxon>
        <taxon>Insecta</taxon>
        <taxon>Pterygota</taxon>
        <taxon>Neoptera</taxon>
        <taxon>Endopterygota</taxon>
        <taxon>Diptera</taxon>
        <taxon>Brachycera</taxon>
        <taxon>Muscomorpha</taxon>
        <taxon>Ephydroidea</taxon>
        <taxon>Drosophilidae</taxon>
        <taxon>Drosophila</taxon>
        <taxon>Sophophora</taxon>
    </lineage>
</organism>